<gene>
    <name evidence="1" type="primary">nhaA</name>
    <name type="ordered locus">Sbal195_1266</name>
</gene>
<evidence type="ECO:0000255" key="1">
    <source>
        <dbReference type="HAMAP-Rule" id="MF_01844"/>
    </source>
</evidence>
<organism>
    <name type="scientific">Shewanella baltica (strain OS195)</name>
    <dbReference type="NCBI Taxonomy" id="399599"/>
    <lineage>
        <taxon>Bacteria</taxon>
        <taxon>Pseudomonadati</taxon>
        <taxon>Pseudomonadota</taxon>
        <taxon>Gammaproteobacteria</taxon>
        <taxon>Alteromonadales</taxon>
        <taxon>Shewanellaceae</taxon>
        <taxon>Shewanella</taxon>
    </lineage>
</organism>
<feature type="chain" id="PRO_0000334422" description="Na(+)/H(+) antiporter NhaA">
    <location>
        <begin position="1"/>
        <end position="389"/>
    </location>
</feature>
<feature type="transmembrane region" description="Helical" evidence="1">
    <location>
        <begin position="14"/>
        <end position="34"/>
    </location>
</feature>
<feature type="transmembrane region" description="Helical" evidence="1">
    <location>
        <begin position="59"/>
        <end position="79"/>
    </location>
</feature>
<feature type="transmembrane region" description="Helical" evidence="1">
    <location>
        <begin position="95"/>
        <end position="115"/>
    </location>
</feature>
<feature type="transmembrane region" description="Helical" evidence="1">
    <location>
        <begin position="124"/>
        <end position="144"/>
    </location>
</feature>
<feature type="transmembrane region" description="Helical" evidence="1">
    <location>
        <begin position="154"/>
        <end position="174"/>
    </location>
</feature>
<feature type="transmembrane region" description="Helical" evidence="1">
    <location>
        <begin position="177"/>
        <end position="197"/>
    </location>
</feature>
<feature type="transmembrane region" description="Helical" evidence="1">
    <location>
        <begin position="213"/>
        <end position="233"/>
    </location>
</feature>
<feature type="transmembrane region" description="Helical" evidence="1">
    <location>
        <begin position="257"/>
        <end position="277"/>
    </location>
</feature>
<feature type="transmembrane region" description="Helical" evidence="1">
    <location>
        <begin position="292"/>
        <end position="312"/>
    </location>
</feature>
<feature type="transmembrane region" description="Helical" evidence="1">
    <location>
        <begin position="328"/>
        <end position="348"/>
    </location>
</feature>
<feature type="transmembrane region" description="Helical" evidence="1">
    <location>
        <begin position="363"/>
        <end position="383"/>
    </location>
</feature>
<reference key="1">
    <citation type="submission" date="2007-11" db="EMBL/GenBank/DDBJ databases">
        <title>Complete sequence of chromosome of Shewanella baltica OS195.</title>
        <authorList>
            <consortium name="US DOE Joint Genome Institute"/>
            <person name="Copeland A."/>
            <person name="Lucas S."/>
            <person name="Lapidus A."/>
            <person name="Barry K."/>
            <person name="Glavina del Rio T."/>
            <person name="Dalin E."/>
            <person name="Tice H."/>
            <person name="Pitluck S."/>
            <person name="Chain P."/>
            <person name="Malfatti S."/>
            <person name="Shin M."/>
            <person name="Vergez L."/>
            <person name="Schmutz J."/>
            <person name="Larimer F."/>
            <person name="Land M."/>
            <person name="Hauser L."/>
            <person name="Kyrpides N."/>
            <person name="Kim E."/>
            <person name="Brettar I."/>
            <person name="Rodrigues J."/>
            <person name="Konstantinidis K."/>
            <person name="Klappenbach J."/>
            <person name="Hofle M."/>
            <person name="Tiedje J."/>
            <person name="Richardson P."/>
        </authorList>
    </citation>
    <scope>NUCLEOTIDE SEQUENCE [LARGE SCALE GENOMIC DNA]</scope>
    <source>
        <strain>OS195</strain>
    </source>
</reference>
<accession>A9L5M4</accession>
<protein>
    <recommendedName>
        <fullName evidence="1">Na(+)/H(+) antiporter NhaA</fullName>
    </recommendedName>
    <alternativeName>
        <fullName evidence="1">Sodium/proton antiporter NhaA</fullName>
    </alternativeName>
</protein>
<name>NHAA_SHEB9</name>
<sequence>MEKAIRNFLSQESAGGILLLVAVALAMLMANSPLSGLYQGFLGTDVQVKIGELDIHKPLILWINDGLMAVFFLLIGLEVKRELLEGALSSVAQASLPTFAAIGGMLVPAGVYLLFNYGDPVTQAGWAIPAATDIAFALGIMALLGSRVPVSLKVFLLALAIIDDLGVIVIIALFYSTDLSTISLVIASLAIAGLVGLNRKGVTSLLPYGILGLILWVAVLKSGVHATLAGVIIAFCIPLRAKDGSSPSEGLEHSLHPWSTFFILPVFAFANAGVYVGNMNLETLISPVPVGIALGLMLGKPIGVMVFSYIAVKLKLAQLPDGIGWKQIAPVAAMCGIGFTMSMFIASLAFEHADPMYGDLARLGTLIGSIMAALVGYFWLSKVLPNKGV</sequence>
<dbReference type="EMBL" id="CP000891">
    <property type="protein sequence ID" value="ABX48441.1"/>
    <property type="molecule type" value="Genomic_DNA"/>
</dbReference>
<dbReference type="RefSeq" id="WP_006085063.1">
    <property type="nucleotide sequence ID" value="NC_009997.1"/>
</dbReference>
<dbReference type="SMR" id="A9L5M4"/>
<dbReference type="GeneID" id="11771536"/>
<dbReference type="KEGG" id="sbn:Sbal195_1266"/>
<dbReference type="HOGENOM" id="CLU_015803_1_0_6"/>
<dbReference type="Proteomes" id="UP000000770">
    <property type="component" value="Chromosome"/>
</dbReference>
<dbReference type="GO" id="GO:0005886">
    <property type="term" value="C:plasma membrane"/>
    <property type="evidence" value="ECO:0007669"/>
    <property type="project" value="UniProtKB-SubCell"/>
</dbReference>
<dbReference type="GO" id="GO:0015385">
    <property type="term" value="F:sodium:proton antiporter activity"/>
    <property type="evidence" value="ECO:0007669"/>
    <property type="project" value="TreeGrafter"/>
</dbReference>
<dbReference type="GO" id="GO:0006885">
    <property type="term" value="P:regulation of pH"/>
    <property type="evidence" value="ECO:0007669"/>
    <property type="project" value="InterPro"/>
</dbReference>
<dbReference type="Gene3D" id="1.20.1530.10">
    <property type="entry name" value="Na+/H+ antiporter like domain"/>
    <property type="match status" value="1"/>
</dbReference>
<dbReference type="HAMAP" id="MF_01844">
    <property type="entry name" value="NhaA"/>
    <property type="match status" value="1"/>
</dbReference>
<dbReference type="InterPro" id="IPR023171">
    <property type="entry name" value="Na/H_antiporter_dom_sf"/>
</dbReference>
<dbReference type="InterPro" id="IPR004670">
    <property type="entry name" value="NhaA"/>
</dbReference>
<dbReference type="NCBIfam" id="TIGR00773">
    <property type="entry name" value="NhaA"/>
    <property type="match status" value="1"/>
</dbReference>
<dbReference type="NCBIfam" id="NF007111">
    <property type="entry name" value="PRK09560.1"/>
    <property type="match status" value="1"/>
</dbReference>
<dbReference type="NCBIfam" id="NF007112">
    <property type="entry name" value="PRK09561.1"/>
    <property type="match status" value="1"/>
</dbReference>
<dbReference type="PANTHER" id="PTHR30341:SF0">
    <property type="entry name" value="NA(+)_H(+) ANTIPORTER NHAA"/>
    <property type="match status" value="1"/>
</dbReference>
<dbReference type="PANTHER" id="PTHR30341">
    <property type="entry name" value="SODIUM ION/PROTON ANTIPORTER NHAA-RELATED"/>
    <property type="match status" value="1"/>
</dbReference>
<dbReference type="Pfam" id="PF06965">
    <property type="entry name" value="Na_H_antiport_1"/>
    <property type="match status" value="1"/>
</dbReference>
<proteinExistence type="inferred from homology"/>
<keyword id="KW-0050">Antiport</keyword>
<keyword id="KW-0997">Cell inner membrane</keyword>
<keyword id="KW-1003">Cell membrane</keyword>
<keyword id="KW-0406">Ion transport</keyword>
<keyword id="KW-0472">Membrane</keyword>
<keyword id="KW-0915">Sodium</keyword>
<keyword id="KW-0739">Sodium transport</keyword>
<keyword id="KW-0812">Transmembrane</keyword>
<keyword id="KW-1133">Transmembrane helix</keyword>
<keyword id="KW-0813">Transport</keyword>
<comment type="function">
    <text evidence="1">Na(+)/H(+) antiporter that extrudes sodium in exchange for external protons.</text>
</comment>
<comment type="catalytic activity">
    <reaction evidence="1">
        <text>Na(+)(in) + 2 H(+)(out) = Na(+)(out) + 2 H(+)(in)</text>
        <dbReference type="Rhea" id="RHEA:29251"/>
        <dbReference type="ChEBI" id="CHEBI:15378"/>
        <dbReference type="ChEBI" id="CHEBI:29101"/>
    </reaction>
    <physiologicalReaction direction="left-to-right" evidence="1">
        <dbReference type="Rhea" id="RHEA:29252"/>
    </physiologicalReaction>
</comment>
<comment type="subcellular location">
    <subcellularLocation>
        <location evidence="1">Cell inner membrane</location>
        <topology evidence="1">Multi-pass membrane protein</topology>
    </subcellularLocation>
</comment>
<comment type="similarity">
    <text evidence="1">Belongs to the NhaA Na(+)/H(+) (TC 2.A.33) antiporter family.</text>
</comment>